<dbReference type="EMBL" id="AE016827">
    <property type="protein sequence ID" value="AAU38173.1"/>
    <property type="molecule type" value="Genomic_DNA"/>
</dbReference>
<dbReference type="RefSeq" id="WP_011200738.1">
    <property type="nucleotide sequence ID" value="NC_006300.1"/>
</dbReference>
<dbReference type="SMR" id="Q65S87"/>
<dbReference type="STRING" id="221988.MS1566"/>
<dbReference type="KEGG" id="msu:MS1566"/>
<dbReference type="eggNOG" id="COG2973">
    <property type="taxonomic scope" value="Bacteria"/>
</dbReference>
<dbReference type="HOGENOM" id="CLU_147939_0_0_6"/>
<dbReference type="OrthoDB" id="5704033at2"/>
<dbReference type="Proteomes" id="UP000000607">
    <property type="component" value="Chromosome"/>
</dbReference>
<dbReference type="GO" id="GO:0005737">
    <property type="term" value="C:cytoplasm"/>
    <property type="evidence" value="ECO:0007669"/>
    <property type="project" value="UniProtKB-SubCell"/>
</dbReference>
<dbReference type="GO" id="GO:0003700">
    <property type="term" value="F:DNA-binding transcription factor activity"/>
    <property type="evidence" value="ECO:0007669"/>
    <property type="project" value="InterPro"/>
</dbReference>
<dbReference type="GO" id="GO:0043565">
    <property type="term" value="F:sequence-specific DNA binding"/>
    <property type="evidence" value="ECO:0007669"/>
    <property type="project" value="InterPro"/>
</dbReference>
<dbReference type="GO" id="GO:0045892">
    <property type="term" value="P:negative regulation of DNA-templated transcription"/>
    <property type="evidence" value="ECO:0007669"/>
    <property type="project" value="UniProtKB-UniRule"/>
</dbReference>
<dbReference type="Gene3D" id="1.10.1270.10">
    <property type="entry name" value="TrpR-like"/>
    <property type="match status" value="1"/>
</dbReference>
<dbReference type="HAMAP" id="MF_00475">
    <property type="entry name" value="Trp_repressor"/>
    <property type="match status" value="1"/>
</dbReference>
<dbReference type="InterPro" id="IPR000831">
    <property type="entry name" value="Trp_repress"/>
</dbReference>
<dbReference type="InterPro" id="IPR013335">
    <property type="entry name" value="Trp_repress_bac"/>
</dbReference>
<dbReference type="InterPro" id="IPR010921">
    <property type="entry name" value="Trp_repressor/repl_initiator"/>
</dbReference>
<dbReference type="InterPro" id="IPR038116">
    <property type="entry name" value="TrpR-like_sf"/>
</dbReference>
<dbReference type="NCBIfam" id="TIGR01321">
    <property type="entry name" value="TrpR"/>
    <property type="match status" value="1"/>
</dbReference>
<dbReference type="PANTHER" id="PTHR38025">
    <property type="entry name" value="TRP OPERON REPRESSOR"/>
    <property type="match status" value="1"/>
</dbReference>
<dbReference type="PANTHER" id="PTHR38025:SF1">
    <property type="entry name" value="TRP OPERON REPRESSOR"/>
    <property type="match status" value="1"/>
</dbReference>
<dbReference type="Pfam" id="PF01371">
    <property type="entry name" value="Trp_repressor"/>
    <property type="match status" value="1"/>
</dbReference>
<dbReference type="PIRSF" id="PIRSF003196">
    <property type="entry name" value="Trp_repressor"/>
    <property type="match status" value="1"/>
</dbReference>
<dbReference type="SUPFAM" id="SSF48295">
    <property type="entry name" value="TrpR-like"/>
    <property type="match status" value="1"/>
</dbReference>
<feature type="chain" id="PRO_0000196510" description="Trp operon repressor homolog">
    <location>
        <begin position="1"/>
        <end position="101"/>
    </location>
</feature>
<feature type="DNA-binding region" evidence="1">
    <location>
        <begin position="59"/>
        <end position="82"/>
    </location>
</feature>
<comment type="function">
    <text evidence="1">This protein is an aporepressor. When complexed with L-tryptophan it binds the operator region of the trp operon and prevents the initiation of transcription.</text>
</comment>
<comment type="subunit">
    <text evidence="1">Homodimer.</text>
</comment>
<comment type="subcellular location">
    <subcellularLocation>
        <location evidence="1">Cytoplasm</location>
    </subcellularLocation>
</comment>
<comment type="similarity">
    <text evidence="1">Belongs to the TrpR family.</text>
</comment>
<name>TRPR_MANSM</name>
<reference key="1">
    <citation type="journal article" date="2004" name="Nat. Biotechnol.">
        <title>The genome sequence of the capnophilic rumen bacterium Mannheimia succiniciproducens.</title>
        <authorList>
            <person name="Hong S.H."/>
            <person name="Kim J.S."/>
            <person name="Lee S.Y."/>
            <person name="In Y.H."/>
            <person name="Choi S.S."/>
            <person name="Rih J.-K."/>
            <person name="Kim C.H."/>
            <person name="Jeong H."/>
            <person name="Hur C.G."/>
            <person name="Kim J.J."/>
        </authorList>
    </citation>
    <scope>NUCLEOTIDE SEQUENCE [LARGE SCALE GENOMIC DNA]</scope>
    <source>
        <strain>KCTC 0769BP / MBEL55E</strain>
    </source>
</reference>
<gene>
    <name evidence="1" type="primary">trpR</name>
    <name type="ordered locus">MS1566</name>
</gene>
<protein>
    <recommendedName>
        <fullName evidence="1">Trp operon repressor homolog</fullName>
    </recommendedName>
</protein>
<proteinExistence type="inferred from homology"/>
<accession>Q65S87</accession>
<evidence type="ECO:0000255" key="1">
    <source>
        <dbReference type="HAMAP-Rule" id="MF_00475"/>
    </source>
</evidence>
<keyword id="KW-0963">Cytoplasm</keyword>
<keyword id="KW-0238">DNA-binding</keyword>
<keyword id="KW-0678">Repressor</keyword>
<keyword id="KW-0804">Transcription</keyword>
<keyword id="KW-0805">Transcription regulation</keyword>
<organism>
    <name type="scientific">Mannheimia succiniciproducens (strain KCTC 0769BP / MBEL55E)</name>
    <dbReference type="NCBI Taxonomy" id="221988"/>
    <lineage>
        <taxon>Bacteria</taxon>
        <taxon>Pseudomonadati</taxon>
        <taxon>Pseudomonadota</taxon>
        <taxon>Gammaproteobacteria</taxon>
        <taxon>Pasteurellales</taxon>
        <taxon>Pasteurellaceae</taxon>
        <taxon>Basfia</taxon>
    </lineage>
</organism>
<sequence length="101" mass="11794">MYISRNMEQWTKFIETLRIAFNDGKEQDLLTLLLTPDERDAIGLRLQIVAQLLDKKIPQREIQQNLNTSAATITRGSNMLKLMSPDFMEWVKKHTNETENT</sequence>